<protein>
    <recommendedName>
        <fullName evidence="1">Putative membrane protein insertion efficiency factor</fullName>
    </recommendedName>
</protein>
<name>YIDD_RHIWR</name>
<evidence type="ECO:0000255" key="1">
    <source>
        <dbReference type="HAMAP-Rule" id="MF_00386"/>
    </source>
</evidence>
<keyword id="KW-0997">Cell inner membrane</keyword>
<keyword id="KW-1003">Cell membrane</keyword>
<keyword id="KW-0472">Membrane</keyword>
<keyword id="KW-1185">Reference proteome</keyword>
<organism>
    <name type="scientific">Rhizorhabdus wittichii (strain DSM 6014 / CCUG 31198 / JCM 15750 / NBRC 105917 / EY 4224 / RW1)</name>
    <name type="common">Sphingomonas wittichii</name>
    <dbReference type="NCBI Taxonomy" id="392499"/>
    <lineage>
        <taxon>Bacteria</taxon>
        <taxon>Pseudomonadati</taxon>
        <taxon>Pseudomonadota</taxon>
        <taxon>Alphaproteobacteria</taxon>
        <taxon>Sphingomonadales</taxon>
        <taxon>Sphingomonadaceae</taxon>
        <taxon>Rhizorhabdus</taxon>
    </lineage>
</organism>
<sequence length="70" mass="7707">MIGRLIILLARAWQMGPSLVLPPTCRYVPSCSAYTIEAVSRYGALKGGWLGFRRICRCHPWGGSGFDPVP</sequence>
<proteinExistence type="inferred from homology"/>
<accession>A5VCE6</accession>
<dbReference type="EMBL" id="CP000699">
    <property type="protein sequence ID" value="ABQ69962.1"/>
    <property type="molecule type" value="Genomic_DNA"/>
</dbReference>
<dbReference type="STRING" id="392499.Swit_3616"/>
<dbReference type="PaxDb" id="392499-Swit_3616"/>
<dbReference type="KEGG" id="swi:Swit_3616"/>
<dbReference type="eggNOG" id="COG0759">
    <property type="taxonomic scope" value="Bacteria"/>
</dbReference>
<dbReference type="HOGENOM" id="CLU_144811_6_1_5"/>
<dbReference type="OrthoDB" id="9801753at2"/>
<dbReference type="Proteomes" id="UP000001989">
    <property type="component" value="Chromosome"/>
</dbReference>
<dbReference type="GO" id="GO:0005886">
    <property type="term" value="C:plasma membrane"/>
    <property type="evidence" value="ECO:0007669"/>
    <property type="project" value="UniProtKB-SubCell"/>
</dbReference>
<dbReference type="HAMAP" id="MF_00386">
    <property type="entry name" value="UPF0161_YidD"/>
    <property type="match status" value="1"/>
</dbReference>
<dbReference type="InterPro" id="IPR002696">
    <property type="entry name" value="Membr_insert_effic_factor_YidD"/>
</dbReference>
<dbReference type="NCBIfam" id="TIGR00278">
    <property type="entry name" value="membrane protein insertion efficiency factor YidD"/>
    <property type="match status" value="1"/>
</dbReference>
<dbReference type="PANTHER" id="PTHR33383">
    <property type="entry name" value="MEMBRANE PROTEIN INSERTION EFFICIENCY FACTOR-RELATED"/>
    <property type="match status" value="1"/>
</dbReference>
<dbReference type="PANTHER" id="PTHR33383:SF1">
    <property type="entry name" value="MEMBRANE PROTEIN INSERTION EFFICIENCY FACTOR-RELATED"/>
    <property type="match status" value="1"/>
</dbReference>
<dbReference type="Pfam" id="PF01809">
    <property type="entry name" value="YidD"/>
    <property type="match status" value="1"/>
</dbReference>
<dbReference type="SMART" id="SM01234">
    <property type="entry name" value="Haemolytic"/>
    <property type="match status" value="1"/>
</dbReference>
<feature type="chain" id="PRO_1000013133" description="Putative membrane protein insertion efficiency factor">
    <location>
        <begin position="1"/>
        <end position="70"/>
    </location>
</feature>
<gene>
    <name type="ordered locus">Swit_3616</name>
</gene>
<comment type="function">
    <text evidence="1">Could be involved in insertion of integral membrane proteins into the membrane.</text>
</comment>
<comment type="subcellular location">
    <subcellularLocation>
        <location evidence="1">Cell inner membrane</location>
        <topology evidence="1">Peripheral membrane protein</topology>
        <orientation evidence="1">Cytoplasmic side</orientation>
    </subcellularLocation>
</comment>
<comment type="similarity">
    <text evidence="1">Belongs to the UPF0161 family.</text>
</comment>
<reference key="1">
    <citation type="journal article" date="2010" name="J. Bacteriol.">
        <title>Genome sequence of the dioxin-mineralizing bacterium Sphingomonas wittichii RW1.</title>
        <authorList>
            <person name="Miller T.R."/>
            <person name="Delcher A.L."/>
            <person name="Salzberg S.L."/>
            <person name="Saunders E."/>
            <person name="Detter J.C."/>
            <person name="Halden R.U."/>
        </authorList>
    </citation>
    <scope>NUCLEOTIDE SEQUENCE [LARGE SCALE GENOMIC DNA]</scope>
    <source>
        <strain>DSM 6014 / CCUG 31198 / JCM 15750 / NBRC 105917 / EY 4224 / RW1</strain>
    </source>
</reference>